<protein>
    <recommendedName>
        <fullName evidence="1">Thiopurine S-methyltransferase</fullName>
        <ecNumber evidence="1">2.1.1.67</ecNumber>
    </recommendedName>
    <alternativeName>
        <fullName evidence="1">Thiopurine methyltransferase</fullName>
    </alternativeName>
</protein>
<dbReference type="EC" id="2.1.1.67" evidence="1"/>
<dbReference type="EMBL" id="AM181176">
    <property type="protein sequence ID" value="CAY47976.1"/>
    <property type="molecule type" value="Genomic_DNA"/>
</dbReference>
<dbReference type="RefSeq" id="WP_012723004.1">
    <property type="nucleotide sequence ID" value="NC_012660.1"/>
</dbReference>
<dbReference type="SMR" id="C3K732"/>
<dbReference type="PATRIC" id="fig|216595.4.peg.1951"/>
<dbReference type="eggNOG" id="COG0500">
    <property type="taxonomic scope" value="Bacteria"/>
</dbReference>
<dbReference type="HOGENOM" id="CLU_085515_1_0_6"/>
<dbReference type="OrthoDB" id="9778208at2"/>
<dbReference type="GO" id="GO:0005737">
    <property type="term" value="C:cytoplasm"/>
    <property type="evidence" value="ECO:0007669"/>
    <property type="project" value="UniProtKB-SubCell"/>
</dbReference>
<dbReference type="GO" id="GO:0008119">
    <property type="term" value="F:thiopurine S-methyltransferase activity"/>
    <property type="evidence" value="ECO:0007669"/>
    <property type="project" value="UniProtKB-UniRule"/>
</dbReference>
<dbReference type="GO" id="GO:0032259">
    <property type="term" value="P:methylation"/>
    <property type="evidence" value="ECO:0007669"/>
    <property type="project" value="UniProtKB-KW"/>
</dbReference>
<dbReference type="GO" id="GO:0010038">
    <property type="term" value="P:response to metal ion"/>
    <property type="evidence" value="ECO:0007669"/>
    <property type="project" value="InterPro"/>
</dbReference>
<dbReference type="FunFam" id="3.40.50.150:FF:000101">
    <property type="entry name" value="Thiopurine S-methyltransferase"/>
    <property type="match status" value="1"/>
</dbReference>
<dbReference type="Gene3D" id="3.40.50.150">
    <property type="entry name" value="Vaccinia Virus protein VP39"/>
    <property type="match status" value="1"/>
</dbReference>
<dbReference type="HAMAP" id="MF_00812">
    <property type="entry name" value="Thiopur_methtran"/>
    <property type="match status" value="1"/>
</dbReference>
<dbReference type="InterPro" id="IPR029063">
    <property type="entry name" value="SAM-dependent_MTases_sf"/>
</dbReference>
<dbReference type="InterPro" id="IPR022474">
    <property type="entry name" value="Thiopur_S-MeTfrase_Se/Te_detox"/>
</dbReference>
<dbReference type="InterPro" id="IPR025835">
    <property type="entry name" value="Thiopurine_S-MeTrfase"/>
</dbReference>
<dbReference type="InterPro" id="IPR008854">
    <property type="entry name" value="TPMT"/>
</dbReference>
<dbReference type="NCBIfam" id="NF009732">
    <property type="entry name" value="PRK13255.1"/>
    <property type="match status" value="1"/>
</dbReference>
<dbReference type="NCBIfam" id="TIGR03840">
    <property type="entry name" value="TMPT_Se_Te"/>
    <property type="match status" value="1"/>
</dbReference>
<dbReference type="PANTHER" id="PTHR10259">
    <property type="entry name" value="THIOPURINE S-METHYLTRANSFERASE"/>
    <property type="match status" value="1"/>
</dbReference>
<dbReference type="PANTHER" id="PTHR10259:SF11">
    <property type="entry name" value="THIOPURINE S-METHYLTRANSFERASE"/>
    <property type="match status" value="1"/>
</dbReference>
<dbReference type="Pfam" id="PF05724">
    <property type="entry name" value="TPMT"/>
    <property type="match status" value="1"/>
</dbReference>
<dbReference type="PIRSF" id="PIRSF023956">
    <property type="entry name" value="Thiopurine_S-methyltransferase"/>
    <property type="match status" value="1"/>
</dbReference>
<dbReference type="SUPFAM" id="SSF53335">
    <property type="entry name" value="S-adenosyl-L-methionine-dependent methyltransferases"/>
    <property type="match status" value="1"/>
</dbReference>
<dbReference type="PROSITE" id="PS51585">
    <property type="entry name" value="SAM_MT_TPMT"/>
    <property type="match status" value="1"/>
</dbReference>
<gene>
    <name evidence="1" type="primary">tpm</name>
    <name type="ordered locus">PFLU_1728</name>
</gene>
<keyword id="KW-0963">Cytoplasm</keyword>
<keyword id="KW-0489">Methyltransferase</keyword>
<keyword id="KW-0949">S-adenosyl-L-methionine</keyword>
<keyword id="KW-0808">Transferase</keyword>
<organism>
    <name type="scientific">Pseudomonas fluorescens (strain SBW25)</name>
    <dbReference type="NCBI Taxonomy" id="216595"/>
    <lineage>
        <taxon>Bacteria</taxon>
        <taxon>Pseudomonadati</taxon>
        <taxon>Pseudomonadota</taxon>
        <taxon>Gammaproteobacteria</taxon>
        <taxon>Pseudomonadales</taxon>
        <taxon>Pseudomonadaceae</taxon>
        <taxon>Pseudomonas</taxon>
    </lineage>
</organism>
<reference key="1">
    <citation type="journal article" date="2009" name="Genome Biol.">
        <title>Genomic and genetic analyses of diversity and plant interactions of Pseudomonas fluorescens.</title>
        <authorList>
            <person name="Silby M.W."/>
            <person name="Cerdeno-Tarraga A.M."/>
            <person name="Vernikos G.S."/>
            <person name="Giddens S.R."/>
            <person name="Jackson R.W."/>
            <person name="Preston G.M."/>
            <person name="Zhang X.-X."/>
            <person name="Moon C.D."/>
            <person name="Gehrig S.M."/>
            <person name="Godfrey S.A.C."/>
            <person name="Knight C.G."/>
            <person name="Malone J.G."/>
            <person name="Robinson Z."/>
            <person name="Spiers A.J."/>
            <person name="Harris S."/>
            <person name="Challis G.L."/>
            <person name="Yaxley A.M."/>
            <person name="Harris D."/>
            <person name="Seeger K."/>
            <person name="Murphy L."/>
            <person name="Rutter S."/>
            <person name="Squares R."/>
            <person name="Quail M.A."/>
            <person name="Saunders E."/>
            <person name="Mavromatis K."/>
            <person name="Brettin T.S."/>
            <person name="Bentley S.D."/>
            <person name="Hothersall J."/>
            <person name="Stephens E."/>
            <person name="Thomas C.M."/>
            <person name="Parkhill J."/>
            <person name="Levy S.B."/>
            <person name="Rainey P.B."/>
            <person name="Thomson N.R."/>
        </authorList>
    </citation>
    <scope>NUCLEOTIDE SEQUENCE [LARGE SCALE GENOMIC DNA]</scope>
    <source>
        <strain>SBW25</strain>
    </source>
</reference>
<comment type="catalytic activity">
    <reaction evidence="1">
        <text>S-adenosyl-L-methionine + a thiopurine = S-adenosyl-L-homocysteine + a thiopurine S-methylether.</text>
        <dbReference type="EC" id="2.1.1.67"/>
    </reaction>
</comment>
<comment type="subcellular location">
    <subcellularLocation>
        <location evidence="1">Cytoplasm</location>
    </subcellularLocation>
</comment>
<comment type="similarity">
    <text evidence="1">Belongs to the class I-like SAM-binding methyltransferase superfamily. TPMT family.</text>
</comment>
<name>TPMT_PSEFS</name>
<sequence>MEPKFWQERWARNQIGFHLPEVNPYLLRHWSHLSLADDAKVLVPLCGKSLDLMWLASHGLRVMGVELSEQAVETFFSEQSLTPHITRRGAFTVYQADLLEVWCGDFFALGAEDLADCTALYDRAALIALPPLMRAQYAEHLNTLLRPGCQGLLVTLDYDQTQKAGPPFAVTDDEVAVLFGLKWTLEVLEARDILGESWKFVQDGVTRLDERVYRLVMR</sequence>
<proteinExistence type="inferred from homology"/>
<evidence type="ECO:0000255" key="1">
    <source>
        <dbReference type="HAMAP-Rule" id="MF_00812"/>
    </source>
</evidence>
<accession>C3K732</accession>
<feature type="chain" id="PRO_1000213023" description="Thiopurine S-methyltransferase">
    <location>
        <begin position="1"/>
        <end position="218"/>
    </location>
</feature>
<feature type="binding site" evidence="1">
    <location>
        <position position="10"/>
    </location>
    <ligand>
        <name>S-adenosyl-L-methionine</name>
        <dbReference type="ChEBI" id="CHEBI:59789"/>
    </ligand>
</feature>
<feature type="binding site" evidence="1">
    <location>
        <position position="45"/>
    </location>
    <ligand>
        <name>S-adenosyl-L-methionine</name>
        <dbReference type="ChEBI" id="CHEBI:59789"/>
    </ligand>
</feature>
<feature type="binding site" evidence="1">
    <location>
        <position position="66"/>
    </location>
    <ligand>
        <name>S-adenosyl-L-methionine</name>
        <dbReference type="ChEBI" id="CHEBI:59789"/>
    </ligand>
</feature>
<feature type="binding site" evidence="1">
    <location>
        <position position="123"/>
    </location>
    <ligand>
        <name>S-adenosyl-L-methionine</name>
        <dbReference type="ChEBI" id="CHEBI:59789"/>
    </ligand>
</feature>